<organism>
    <name type="scientific">Saccharomyces cerevisiae (strain ATCC 204508 / S288c)</name>
    <name type="common">Baker's yeast</name>
    <dbReference type="NCBI Taxonomy" id="559292"/>
    <lineage>
        <taxon>Eukaryota</taxon>
        <taxon>Fungi</taxon>
        <taxon>Dikarya</taxon>
        <taxon>Ascomycota</taxon>
        <taxon>Saccharomycotina</taxon>
        <taxon>Saccharomycetes</taxon>
        <taxon>Saccharomycetales</taxon>
        <taxon>Saccharomycetaceae</taxon>
        <taxon>Saccharomyces</taxon>
    </lineage>
</organism>
<feature type="chain" id="PRO_0000252484" description="Transcription factor tau 60 kDa subunit">
    <location>
        <begin position="1"/>
        <end position="588"/>
    </location>
</feature>
<feature type="region of interest" description="Sufficient for SPT15-binding">
    <location>
        <begin position="399"/>
        <end position="588"/>
    </location>
</feature>
<feature type="site" description="Involved in the interaction with TFC6">
    <location>
        <position position="358"/>
    </location>
</feature>
<feature type="sequence conflict" description="In Ref. 4; AA sequence." evidence="6" ref="4">
    <original>D</original>
    <variation>T</variation>
    <location>
        <position position="36"/>
    </location>
</feature>
<feature type="strand" evidence="8">
    <location>
        <begin position="7"/>
        <end position="11"/>
    </location>
</feature>
<feature type="strand" evidence="8">
    <location>
        <begin position="15"/>
        <end position="18"/>
    </location>
</feature>
<feature type="strand" evidence="8">
    <location>
        <begin position="21"/>
        <end position="23"/>
    </location>
</feature>
<feature type="strand" evidence="8">
    <location>
        <begin position="29"/>
        <end position="31"/>
    </location>
</feature>
<feature type="strand" evidence="8">
    <location>
        <begin position="34"/>
        <end position="42"/>
    </location>
</feature>
<feature type="strand" evidence="7">
    <location>
        <begin position="49"/>
        <end position="51"/>
    </location>
</feature>
<feature type="helix" evidence="8">
    <location>
        <begin position="52"/>
        <end position="54"/>
    </location>
</feature>
<feature type="strand" evidence="8">
    <location>
        <begin position="56"/>
        <end position="61"/>
    </location>
</feature>
<feature type="strand" evidence="8">
    <location>
        <begin position="65"/>
        <end position="67"/>
    </location>
</feature>
<feature type="turn" evidence="8">
    <location>
        <begin position="68"/>
        <end position="70"/>
    </location>
</feature>
<feature type="turn" evidence="8">
    <location>
        <begin position="78"/>
        <end position="81"/>
    </location>
</feature>
<feature type="strand" evidence="8">
    <location>
        <begin position="88"/>
        <end position="93"/>
    </location>
</feature>
<feature type="strand" evidence="8">
    <location>
        <begin position="95"/>
        <end position="98"/>
    </location>
</feature>
<feature type="strand" evidence="8">
    <location>
        <begin position="100"/>
        <end position="104"/>
    </location>
</feature>
<feature type="strand" evidence="8">
    <location>
        <begin position="109"/>
        <end position="113"/>
    </location>
</feature>
<feature type="strand" evidence="8">
    <location>
        <begin position="116"/>
        <end position="120"/>
    </location>
</feature>
<feature type="helix" evidence="8">
    <location>
        <begin position="127"/>
        <end position="130"/>
    </location>
</feature>
<feature type="strand" evidence="8">
    <location>
        <begin position="132"/>
        <end position="137"/>
    </location>
</feature>
<feature type="strand" evidence="8">
    <location>
        <begin position="139"/>
        <end position="148"/>
    </location>
</feature>
<feature type="strand" evidence="8">
    <location>
        <begin position="151"/>
        <end position="160"/>
    </location>
</feature>
<feature type="turn" evidence="7">
    <location>
        <begin position="162"/>
        <end position="164"/>
    </location>
</feature>
<feature type="strand" evidence="8">
    <location>
        <begin position="166"/>
        <end position="175"/>
    </location>
</feature>
<feature type="strand" evidence="8">
    <location>
        <begin position="185"/>
        <end position="191"/>
    </location>
</feature>
<feature type="strand" evidence="8">
    <location>
        <begin position="194"/>
        <end position="199"/>
    </location>
</feature>
<feature type="strand" evidence="8">
    <location>
        <begin position="204"/>
        <end position="208"/>
    </location>
</feature>
<feature type="strand" evidence="7">
    <location>
        <begin position="211"/>
        <end position="214"/>
    </location>
</feature>
<feature type="strand" evidence="8">
    <location>
        <begin position="218"/>
        <end position="222"/>
    </location>
</feature>
<feature type="strand" evidence="8">
    <location>
        <begin position="231"/>
        <end position="235"/>
    </location>
</feature>
<feature type="strand" evidence="8">
    <location>
        <begin position="238"/>
        <end position="243"/>
    </location>
</feature>
<feature type="strand" evidence="8">
    <location>
        <begin position="246"/>
        <end position="251"/>
    </location>
</feature>
<feature type="turn" evidence="8">
    <location>
        <begin position="252"/>
        <end position="254"/>
    </location>
</feature>
<feature type="strand" evidence="8">
    <location>
        <begin position="257"/>
        <end position="261"/>
    </location>
</feature>
<feature type="strand" evidence="8">
    <location>
        <begin position="269"/>
        <end position="272"/>
    </location>
</feature>
<feature type="strand" evidence="8">
    <location>
        <begin position="276"/>
        <end position="278"/>
    </location>
</feature>
<feature type="strand" evidence="8">
    <location>
        <begin position="280"/>
        <end position="284"/>
    </location>
</feature>
<feature type="strand" evidence="8">
    <location>
        <begin position="289"/>
        <end position="293"/>
    </location>
</feature>
<feature type="strand" evidence="8">
    <location>
        <begin position="295"/>
        <end position="297"/>
    </location>
</feature>
<feature type="strand" evidence="8">
    <location>
        <begin position="299"/>
        <end position="302"/>
    </location>
</feature>
<feature type="helix" evidence="8">
    <location>
        <begin position="307"/>
        <end position="321"/>
    </location>
</feature>
<feature type="helix" evidence="8">
    <location>
        <begin position="323"/>
        <end position="325"/>
    </location>
</feature>
<feature type="strand" evidence="8">
    <location>
        <begin position="329"/>
        <end position="338"/>
    </location>
</feature>
<feature type="strand" evidence="8">
    <location>
        <begin position="342"/>
        <end position="353"/>
    </location>
</feature>
<feature type="helix" evidence="8">
    <location>
        <begin position="361"/>
        <end position="363"/>
    </location>
</feature>
<feature type="strand" evidence="8">
    <location>
        <begin position="365"/>
        <end position="375"/>
    </location>
</feature>
<feature type="helix" evidence="8">
    <location>
        <begin position="386"/>
        <end position="393"/>
    </location>
</feature>
<feature type="turn" evidence="8">
    <location>
        <begin position="394"/>
        <end position="397"/>
    </location>
</feature>
<feature type="helix" evidence="8">
    <location>
        <begin position="412"/>
        <end position="415"/>
    </location>
</feature>
<feature type="helix" evidence="8">
    <location>
        <begin position="423"/>
        <end position="431"/>
    </location>
</feature>
<feature type="helix" evidence="8">
    <location>
        <begin position="434"/>
        <end position="445"/>
    </location>
</feature>
<feature type="strand" evidence="8">
    <location>
        <begin position="446"/>
        <end position="448"/>
    </location>
</feature>
<feature type="helix" evidence="8">
    <location>
        <begin position="452"/>
        <end position="463"/>
    </location>
</feature>
<feature type="helix" evidence="8">
    <location>
        <begin position="466"/>
        <end position="468"/>
    </location>
</feature>
<feature type="helix" evidence="8">
    <location>
        <begin position="472"/>
        <end position="485"/>
    </location>
</feature>
<feature type="strand" evidence="8">
    <location>
        <begin position="493"/>
        <end position="499"/>
    </location>
</feature>
<feature type="strand" evidence="8">
    <location>
        <begin position="504"/>
        <end position="508"/>
    </location>
</feature>
<feature type="helix" evidence="8">
    <location>
        <begin position="509"/>
        <end position="513"/>
    </location>
</feature>
<feature type="strand" evidence="8">
    <location>
        <begin position="516"/>
        <end position="520"/>
    </location>
</feature>
<feature type="strand" evidence="8">
    <location>
        <begin position="526"/>
        <end position="529"/>
    </location>
</feature>
<feature type="turn" evidence="8">
    <location>
        <begin position="531"/>
        <end position="533"/>
    </location>
</feature>
<feature type="strand" evidence="8">
    <location>
        <begin position="542"/>
        <end position="544"/>
    </location>
</feature>
<feature type="turn" evidence="8">
    <location>
        <begin position="546"/>
        <end position="548"/>
    </location>
</feature>
<feature type="strand" evidence="8">
    <location>
        <begin position="551"/>
        <end position="553"/>
    </location>
</feature>
<feature type="helix" evidence="8">
    <location>
        <begin position="555"/>
        <end position="557"/>
    </location>
</feature>
<feature type="strand" evidence="7">
    <location>
        <begin position="559"/>
        <end position="561"/>
    </location>
</feature>
<feature type="helix" evidence="8">
    <location>
        <begin position="565"/>
        <end position="573"/>
    </location>
</feature>
<feature type="strand" evidence="8">
    <location>
        <begin position="575"/>
        <end position="577"/>
    </location>
</feature>
<feature type="turn" evidence="8">
    <location>
        <begin position="579"/>
        <end position="581"/>
    </location>
</feature>
<keyword id="KW-0002">3D-structure</keyword>
<keyword id="KW-0903">Direct protein sequencing</keyword>
<keyword id="KW-0238">DNA-binding</keyword>
<keyword id="KW-0539">Nucleus</keyword>
<keyword id="KW-1185">Reference proteome</keyword>
<keyword id="KW-0804">Transcription</keyword>
<keyword id="KW-0805">Transcription regulation</keyword>
<accession>Q12308</accession>
<accession>D6W405</accession>
<comment type="function">
    <text evidence="1">TFIIIC mediates tRNA and 5S RNA gene activation by binding to intragenic promoter elements. Upstream of the transcription start site, TFIIIC assembles the initiation complex TFIIIB-TFIIIC-tDNA, which is sufficient for RNA polymerase III recruitment and function. Part of the tauB domain of TFIIIC that binds boxB DNA promoter sites of tRNA and similar genes. Plays a role in TFIIB assembly through its interaction with SPT15/TBP. Essential for cell viability.</text>
</comment>
<comment type="subunit">
    <text evidence="1 4 5">Heterodimer with TFC6. Component of the TFIIIC complex composed of TFC1, TFC3, TFC4, TFC6, TFC7 and TFC8. The subunits are organized in two globular domains, tauA and tauB, connected by a proteolysis-sensitive and flexible linker. Interacts with SPT15 and directly with TFC6.</text>
</comment>
<comment type="interaction">
    <interactant intactId="EBI-31399">
        <id>Q12308</id>
    </interactant>
    <interactant intactId="EBI-33456">
        <id>Q12415</id>
        <label>TFC7</label>
    </interactant>
    <organismsDiffer>false</organismsDiffer>
    <experiments>3</experiments>
</comment>
<comment type="subcellular location">
    <subcellularLocation>
        <location evidence="2">Nucleus</location>
    </subcellularLocation>
</comment>
<comment type="miscellaneous">
    <text evidence="3">Present with 2070 molecules/cell in log phase SD medium.</text>
</comment>
<sequence length="588" mass="67683">MKLLKDLLVDRKEFEDWKNNLTWARDGTLYLTTFPDISIGQPKYAKDINCNSKNLFHVKEFPLEFENKLDFELAQQNGLLNSQPVCYPRVCKPSPIDDWMAVLSNNGNVSVFKDNKMLTNLDSKGNLSSRTYHCFEWNPIESSIVVGNEDGELQFFSIRKNSENTPEFYFESSIRLSDAGSKDWVTHIVWYEDVLVAALSNNSVFSMTVSASSHQPVSRMIQNASRRKITDLKIVDYKVVLTCPGYVHKIDLKNYSISSLKTGSLENFHIIPLNHEKESTILLMSNKTSYKVLLEDELHVTADNIIAPYLEKKFKKWSTIWNEFNNYETTLVIHGISLSPDGYSIAIVYDMERVAFKYKIASEQSFNIMFAPLYHTWTISERAVGLAWYQTYQIYNQSLPKLPENFSMNKKLLNGNYPISLDFQSYLNALMKSEEMRIIMFLNMTIDKPSILSFLEALYEYAINKKSELTNSFDLACVLSIAAILKREAPIYNGTLLMKNSFLEETFNLESFTADPETVTSTTNNTWKRCGVTLLPILTTHVKICPVSKQRVIDIKRDDLNDYGWFTRGLLERFNEISVYCGTTLEVM</sequence>
<name>TFC8_YEAST</name>
<gene>
    <name type="primary">TFC8</name>
    <name type="ordered locus">YPL007C</name>
</gene>
<reference key="1">
    <citation type="journal article" date="1997" name="Nature">
        <title>The nucleotide sequence of Saccharomyces cerevisiae chromosome XVI.</title>
        <authorList>
            <person name="Bussey H."/>
            <person name="Storms R.K."/>
            <person name="Ahmed A."/>
            <person name="Albermann K."/>
            <person name="Allen E."/>
            <person name="Ansorge W."/>
            <person name="Araujo R."/>
            <person name="Aparicio A."/>
            <person name="Barrell B.G."/>
            <person name="Badcock K."/>
            <person name="Benes V."/>
            <person name="Botstein D."/>
            <person name="Bowman S."/>
            <person name="Brueckner M."/>
            <person name="Carpenter J."/>
            <person name="Cherry J.M."/>
            <person name="Chung E."/>
            <person name="Churcher C.M."/>
            <person name="Coster F."/>
            <person name="Davis K."/>
            <person name="Davis R.W."/>
            <person name="Dietrich F.S."/>
            <person name="Delius H."/>
            <person name="DiPaolo T."/>
            <person name="Dubois E."/>
            <person name="Duesterhoeft A."/>
            <person name="Duncan M."/>
            <person name="Floeth M."/>
            <person name="Fortin N."/>
            <person name="Friesen J.D."/>
            <person name="Fritz C."/>
            <person name="Goffeau A."/>
            <person name="Hall J."/>
            <person name="Hebling U."/>
            <person name="Heumann K."/>
            <person name="Hilbert H."/>
            <person name="Hillier L.W."/>
            <person name="Hunicke-Smith S."/>
            <person name="Hyman R.W."/>
            <person name="Johnston M."/>
            <person name="Kalman S."/>
            <person name="Kleine K."/>
            <person name="Komp C."/>
            <person name="Kurdi O."/>
            <person name="Lashkari D."/>
            <person name="Lew H."/>
            <person name="Lin A."/>
            <person name="Lin D."/>
            <person name="Louis E.J."/>
            <person name="Marathe R."/>
            <person name="Messenguy F."/>
            <person name="Mewes H.-W."/>
            <person name="Mirtipati S."/>
            <person name="Moestl D."/>
            <person name="Mueller-Auer S."/>
            <person name="Namath A."/>
            <person name="Nentwich U."/>
            <person name="Oefner P."/>
            <person name="Pearson D."/>
            <person name="Petel F.X."/>
            <person name="Pohl T.M."/>
            <person name="Purnelle B."/>
            <person name="Rajandream M.A."/>
            <person name="Rechmann S."/>
            <person name="Rieger M."/>
            <person name="Riles L."/>
            <person name="Roberts D."/>
            <person name="Schaefer M."/>
            <person name="Scharfe M."/>
            <person name="Scherens B."/>
            <person name="Schramm S."/>
            <person name="Schroeder M."/>
            <person name="Sdicu A.-M."/>
            <person name="Tettelin H."/>
            <person name="Urrestarazu L.A."/>
            <person name="Ushinsky S."/>
            <person name="Vierendeels F."/>
            <person name="Vissers S."/>
            <person name="Voss H."/>
            <person name="Walsh S.V."/>
            <person name="Wambutt R."/>
            <person name="Wang Y."/>
            <person name="Wedler E."/>
            <person name="Wedler H."/>
            <person name="Winnett E."/>
            <person name="Zhong W.-W."/>
            <person name="Zollner A."/>
            <person name="Vo D.H."/>
            <person name="Hani J."/>
        </authorList>
    </citation>
    <scope>NUCLEOTIDE SEQUENCE [LARGE SCALE GENOMIC DNA]</scope>
    <source>
        <strain>ATCC 204508 / S288c</strain>
    </source>
</reference>
<reference key="2">
    <citation type="journal article" date="2014" name="G3 (Bethesda)">
        <title>The reference genome sequence of Saccharomyces cerevisiae: Then and now.</title>
        <authorList>
            <person name="Engel S.R."/>
            <person name="Dietrich F.S."/>
            <person name="Fisk D.G."/>
            <person name="Binkley G."/>
            <person name="Balakrishnan R."/>
            <person name="Costanzo M.C."/>
            <person name="Dwight S.S."/>
            <person name="Hitz B.C."/>
            <person name="Karra K."/>
            <person name="Nash R.S."/>
            <person name="Weng S."/>
            <person name="Wong E.D."/>
            <person name="Lloyd P."/>
            <person name="Skrzypek M.S."/>
            <person name="Miyasato S.R."/>
            <person name="Simison M."/>
            <person name="Cherry J.M."/>
        </authorList>
    </citation>
    <scope>GENOME REANNOTATION</scope>
    <source>
        <strain>ATCC 204508 / S288c</strain>
    </source>
</reference>
<reference key="3">
    <citation type="journal article" date="2006" name="Protein Expr. Purif.">
        <title>Expression, proteolytic analysis, reconstitution, and crystallization of the tau60/tau91 subcomplex of yeast TFIIIC.</title>
        <authorList>
            <person name="Mylona A."/>
            <person name="Acker J."/>
            <person name="Fernandez-Tornero C."/>
            <person name="Sentenac A."/>
            <person name="Mueller C.W."/>
        </authorList>
    </citation>
    <scope>PROTEIN SEQUENCE OF N-TERMINUS</scope>
    <scope>CRYSTALLIZATION</scope>
    <scope>INTERACTION WITH TFC6</scope>
</reference>
<reference key="4">
    <citation type="journal article" date="1999" name="Mol. Cell. Biol.">
        <title>A subunit of yeast TFIIIC participates in the recruitment of TATA-binding protein.</title>
        <authorList>
            <person name="Deprez E."/>
            <person name="Arrebola R."/>
            <person name="Conesa C."/>
            <person name="Sentenac A."/>
        </authorList>
    </citation>
    <scope>PROTEIN SEQUENCE OF 28-36</scope>
    <scope>FUNCTION</scope>
    <scope>IDENTIFICATION IN THE TFIIIC COMPLEX</scope>
    <scope>INTERACTION WITH SPT15</scope>
</reference>
<reference key="5">
    <citation type="journal article" date="2003" name="Nature">
        <title>Global analysis of protein localization in budding yeast.</title>
        <authorList>
            <person name="Huh W.-K."/>
            <person name="Falvo J.V."/>
            <person name="Gerke L.C."/>
            <person name="Carroll A.S."/>
            <person name="Howson R.W."/>
            <person name="Weissman J.S."/>
            <person name="O'Shea E.K."/>
        </authorList>
    </citation>
    <scope>SUBCELLULAR LOCATION [LARGE SCALE ANALYSIS]</scope>
</reference>
<reference key="6">
    <citation type="journal article" date="2003" name="Nature">
        <title>Global analysis of protein expression in yeast.</title>
        <authorList>
            <person name="Ghaemmaghami S."/>
            <person name="Huh W.-K."/>
            <person name="Bower K."/>
            <person name="Howson R.W."/>
            <person name="Belle A."/>
            <person name="Dephoure N."/>
            <person name="O'Shea E.K."/>
            <person name="Weissman J.S."/>
        </authorList>
    </citation>
    <scope>LEVEL OF PROTEIN EXPRESSION [LARGE SCALE ANALYSIS]</scope>
</reference>
<reference key="7">
    <citation type="journal article" date="2012" name="Proc. Natl. Acad. Sci. U.S.A.">
        <title>N-terminal acetylome analyses and functional insights of the N-terminal acetyltransferase NatB.</title>
        <authorList>
            <person name="Van Damme P."/>
            <person name="Lasa M."/>
            <person name="Polevoda B."/>
            <person name="Gazquez C."/>
            <person name="Elosegui-Artola A."/>
            <person name="Kim D.S."/>
            <person name="De Juan-Pardo E."/>
            <person name="Demeyer K."/>
            <person name="Hole K."/>
            <person name="Larrea E."/>
            <person name="Timmerman E."/>
            <person name="Prieto J."/>
            <person name="Arnesen T."/>
            <person name="Sherman F."/>
            <person name="Gevaert K."/>
            <person name="Aldabe R."/>
        </authorList>
    </citation>
    <scope>IDENTIFICATION BY MASS SPECTROMETRY [LARGE SCALE ANALYSIS]</scope>
</reference>
<reference key="8">
    <citation type="journal article" date="2006" name="Mol. Cell">
        <title>Structure of the tau60/Delta tau91 subcomplex of yeast transcription factor IIIC: insights into preinitiation complex assembly.</title>
        <authorList>
            <person name="Mylona A."/>
            <person name="Fernandez-Tornero C."/>
            <person name="Legrand P."/>
            <person name="Haupt M."/>
            <person name="Sentenac A."/>
            <person name="Acker J."/>
            <person name="Mueller C.W."/>
        </authorList>
    </citation>
    <scope>X-RAY CRYSTALLOGRAPHY (3.20 ANGSTROMS) IN COMPLEX WITH TFC6</scope>
    <scope>INTERACTION WITH SPT15</scope>
    <scope>SITE</scope>
</reference>
<proteinExistence type="evidence at protein level"/>
<evidence type="ECO:0000269" key="1">
    <source>
    </source>
</evidence>
<evidence type="ECO:0000269" key="2">
    <source>
    </source>
</evidence>
<evidence type="ECO:0000269" key="3">
    <source>
    </source>
</evidence>
<evidence type="ECO:0000269" key="4">
    <source>
    </source>
</evidence>
<evidence type="ECO:0000269" key="5">
    <source>
    </source>
</evidence>
<evidence type="ECO:0000305" key="6"/>
<evidence type="ECO:0007829" key="7">
    <source>
        <dbReference type="PDB" id="2J04"/>
    </source>
</evidence>
<evidence type="ECO:0007829" key="8">
    <source>
        <dbReference type="PDB" id="9GC3"/>
    </source>
</evidence>
<dbReference type="EMBL" id="Z71255">
    <property type="protein sequence ID" value="CAA95034.1"/>
    <property type="molecule type" value="Genomic_DNA"/>
</dbReference>
<dbReference type="EMBL" id="Z48483">
    <property type="protein sequence ID" value="CAA88379.1"/>
    <property type="molecule type" value="Genomic_DNA"/>
</dbReference>
<dbReference type="EMBL" id="U33335">
    <property type="protein sequence ID" value="AAB68098.1"/>
    <property type="molecule type" value="Genomic_DNA"/>
</dbReference>
<dbReference type="EMBL" id="BK006949">
    <property type="protein sequence ID" value="DAA11421.1"/>
    <property type="molecule type" value="Genomic_DNA"/>
</dbReference>
<dbReference type="PIR" id="S52524">
    <property type="entry name" value="S52524"/>
</dbReference>
<dbReference type="RefSeq" id="NP_015318.1">
    <property type="nucleotide sequence ID" value="NM_001183821.1"/>
</dbReference>
<dbReference type="PDB" id="2J04">
    <property type="method" value="X-ray"/>
    <property type="resolution" value="3.20 A"/>
    <property type="chains" value="A/C=1-588"/>
</dbReference>
<dbReference type="PDB" id="8FFZ">
    <property type="method" value="EM"/>
    <property type="resolution" value="3.80 A"/>
    <property type="chains" value="F=1-588"/>
</dbReference>
<dbReference type="PDB" id="9GC3">
    <property type="method" value="EM"/>
    <property type="resolution" value="2.46 A"/>
    <property type="chains" value="C=1-588"/>
</dbReference>
<dbReference type="PDBsum" id="2J04"/>
<dbReference type="PDBsum" id="8FFZ"/>
<dbReference type="PDBsum" id="9GC3"/>
<dbReference type="EMDB" id="EMD-29071"/>
<dbReference type="EMDB" id="EMD-51228"/>
<dbReference type="SMR" id="Q12308"/>
<dbReference type="BioGRID" id="36170">
    <property type="interactions" value="191"/>
</dbReference>
<dbReference type="ComplexPortal" id="CPX-1656">
    <property type="entry name" value="General transcription factor TFIIIC complex"/>
</dbReference>
<dbReference type="DIP" id="DIP-6743N"/>
<dbReference type="FunCoup" id="Q12308">
    <property type="interactions" value="32"/>
</dbReference>
<dbReference type="IntAct" id="Q12308">
    <property type="interactions" value="13"/>
</dbReference>
<dbReference type="MINT" id="Q12308"/>
<dbReference type="STRING" id="4932.YPL007C"/>
<dbReference type="PaxDb" id="4932-YPL007C"/>
<dbReference type="PeptideAtlas" id="Q12308"/>
<dbReference type="TopDownProteomics" id="Q12308"/>
<dbReference type="EnsemblFungi" id="YPL007C_mRNA">
    <property type="protein sequence ID" value="YPL007C"/>
    <property type="gene ID" value="YPL007C"/>
</dbReference>
<dbReference type="GeneID" id="856100"/>
<dbReference type="KEGG" id="sce:YPL007C"/>
<dbReference type="AGR" id="SGD:S000005928"/>
<dbReference type="SGD" id="S000005928">
    <property type="gene designation" value="TFC8"/>
</dbReference>
<dbReference type="VEuPathDB" id="FungiDB:YPL007C"/>
<dbReference type="eggNOG" id="ENOG502RFBH">
    <property type="taxonomic scope" value="Eukaryota"/>
</dbReference>
<dbReference type="HOGENOM" id="CLU_033367_0_0_1"/>
<dbReference type="InParanoid" id="Q12308"/>
<dbReference type="OMA" id="NEYGWFT"/>
<dbReference type="OrthoDB" id="6021743at2759"/>
<dbReference type="BioCyc" id="YEAST:G3O-33926-MONOMER"/>
<dbReference type="BioGRID-ORCS" id="856100">
    <property type="hits" value="4 hits in 10 CRISPR screens"/>
</dbReference>
<dbReference type="EvolutionaryTrace" id="Q12308"/>
<dbReference type="PRO" id="PR:Q12308"/>
<dbReference type="Proteomes" id="UP000002311">
    <property type="component" value="Chromosome XVI"/>
</dbReference>
<dbReference type="RNAct" id="Q12308">
    <property type="molecule type" value="protein"/>
</dbReference>
<dbReference type="GO" id="GO:0005634">
    <property type="term" value="C:nucleus"/>
    <property type="evidence" value="ECO:0000303"/>
    <property type="project" value="ComplexPortal"/>
</dbReference>
<dbReference type="GO" id="GO:0000127">
    <property type="term" value="C:transcription factor TFIIIC complex"/>
    <property type="evidence" value="ECO:0000314"/>
    <property type="project" value="SGD"/>
</dbReference>
<dbReference type="GO" id="GO:0003677">
    <property type="term" value="F:DNA binding"/>
    <property type="evidence" value="ECO:0007669"/>
    <property type="project" value="UniProtKB-KW"/>
</dbReference>
<dbReference type="GO" id="GO:0042791">
    <property type="term" value="P:5S class rRNA transcription by RNA polymerase III"/>
    <property type="evidence" value="ECO:0000314"/>
    <property type="project" value="SGD"/>
</dbReference>
<dbReference type="GO" id="GO:0006383">
    <property type="term" value="P:transcription by RNA polymerase III"/>
    <property type="evidence" value="ECO:0000314"/>
    <property type="project" value="SGD"/>
</dbReference>
<dbReference type="GO" id="GO:0006384">
    <property type="term" value="P:transcription initiation at RNA polymerase III promoter"/>
    <property type="evidence" value="ECO:0000303"/>
    <property type="project" value="ComplexPortal"/>
</dbReference>
<dbReference type="Gene3D" id="2.130.10.10">
    <property type="entry name" value="YVTN repeat-like/Quinoprotein amine dehydrogenase"/>
    <property type="match status" value="1"/>
</dbReference>
<dbReference type="InterPro" id="IPR024764">
    <property type="entry name" value="TFIIIC_Znf"/>
</dbReference>
<dbReference type="InterPro" id="IPR015943">
    <property type="entry name" value="WD40/YVTN_repeat-like_dom_sf"/>
</dbReference>
<dbReference type="InterPro" id="IPR036322">
    <property type="entry name" value="WD40_repeat_dom_sf"/>
</dbReference>
<dbReference type="Pfam" id="PF12660">
    <property type="entry name" value="zf-TFIIIC"/>
    <property type="match status" value="1"/>
</dbReference>
<dbReference type="SUPFAM" id="SSF50978">
    <property type="entry name" value="WD40 repeat-like"/>
    <property type="match status" value="1"/>
</dbReference>
<protein>
    <recommendedName>
        <fullName>Transcription factor tau 60 kDa subunit</fullName>
    </recommendedName>
    <alternativeName>
        <fullName>TFIIIC 60 kDa subunit</fullName>
    </alternativeName>
    <alternativeName>
        <fullName>Transcription factor C subunit 8</fullName>
    </alternativeName>
</protein>